<accession>Q5E7E2</accession>
<dbReference type="EMBL" id="CP000020">
    <property type="protein sequence ID" value="AAW85054.1"/>
    <property type="molecule type" value="Genomic_DNA"/>
</dbReference>
<dbReference type="RefSeq" id="WP_011261319.1">
    <property type="nucleotide sequence ID" value="NC_006840.2"/>
</dbReference>
<dbReference type="RefSeq" id="YP_203942.1">
    <property type="nucleotide sequence ID" value="NC_006840.2"/>
</dbReference>
<dbReference type="SMR" id="Q5E7E2"/>
<dbReference type="STRING" id="312309.VF_0559"/>
<dbReference type="EnsemblBacteria" id="AAW85054">
    <property type="protein sequence ID" value="AAW85054"/>
    <property type="gene ID" value="VF_0559"/>
</dbReference>
<dbReference type="GeneID" id="54163208"/>
<dbReference type="KEGG" id="vfi:VF_0559"/>
<dbReference type="PATRIC" id="fig|312309.11.peg.552"/>
<dbReference type="eggNOG" id="COG2973">
    <property type="taxonomic scope" value="Bacteria"/>
</dbReference>
<dbReference type="HOGENOM" id="CLU_147939_0_0_6"/>
<dbReference type="OrthoDB" id="5704033at2"/>
<dbReference type="Proteomes" id="UP000000537">
    <property type="component" value="Chromosome I"/>
</dbReference>
<dbReference type="GO" id="GO:0005737">
    <property type="term" value="C:cytoplasm"/>
    <property type="evidence" value="ECO:0007669"/>
    <property type="project" value="UniProtKB-SubCell"/>
</dbReference>
<dbReference type="GO" id="GO:0003700">
    <property type="term" value="F:DNA-binding transcription factor activity"/>
    <property type="evidence" value="ECO:0007669"/>
    <property type="project" value="InterPro"/>
</dbReference>
<dbReference type="GO" id="GO:0043565">
    <property type="term" value="F:sequence-specific DNA binding"/>
    <property type="evidence" value="ECO:0007669"/>
    <property type="project" value="InterPro"/>
</dbReference>
<dbReference type="GO" id="GO:0045892">
    <property type="term" value="P:negative regulation of DNA-templated transcription"/>
    <property type="evidence" value="ECO:0007669"/>
    <property type="project" value="UniProtKB-UniRule"/>
</dbReference>
<dbReference type="Gene3D" id="1.10.1270.10">
    <property type="entry name" value="TrpR-like"/>
    <property type="match status" value="1"/>
</dbReference>
<dbReference type="HAMAP" id="MF_00475">
    <property type="entry name" value="Trp_repressor"/>
    <property type="match status" value="1"/>
</dbReference>
<dbReference type="InterPro" id="IPR000831">
    <property type="entry name" value="Trp_repress"/>
</dbReference>
<dbReference type="InterPro" id="IPR013335">
    <property type="entry name" value="Trp_repress_bac"/>
</dbReference>
<dbReference type="InterPro" id="IPR010921">
    <property type="entry name" value="Trp_repressor/repl_initiator"/>
</dbReference>
<dbReference type="InterPro" id="IPR038116">
    <property type="entry name" value="TrpR-like_sf"/>
</dbReference>
<dbReference type="NCBIfam" id="TIGR01321">
    <property type="entry name" value="TrpR"/>
    <property type="match status" value="1"/>
</dbReference>
<dbReference type="PANTHER" id="PTHR38025">
    <property type="entry name" value="TRP OPERON REPRESSOR"/>
    <property type="match status" value="1"/>
</dbReference>
<dbReference type="PANTHER" id="PTHR38025:SF1">
    <property type="entry name" value="TRP OPERON REPRESSOR"/>
    <property type="match status" value="1"/>
</dbReference>
<dbReference type="Pfam" id="PF01371">
    <property type="entry name" value="Trp_repressor"/>
    <property type="match status" value="1"/>
</dbReference>
<dbReference type="PIRSF" id="PIRSF003196">
    <property type="entry name" value="Trp_repressor"/>
    <property type="match status" value="1"/>
</dbReference>
<dbReference type="SUPFAM" id="SSF48295">
    <property type="entry name" value="TrpR-like"/>
    <property type="match status" value="1"/>
</dbReference>
<evidence type="ECO:0000255" key="1">
    <source>
        <dbReference type="HAMAP-Rule" id="MF_00475"/>
    </source>
</evidence>
<proteinExistence type="inferred from homology"/>
<gene>
    <name evidence="1" type="primary">trpR</name>
    <name type="ordered locus">VF_0559</name>
</gene>
<reference key="1">
    <citation type="journal article" date="2005" name="Proc. Natl. Acad. Sci. U.S.A.">
        <title>Complete genome sequence of Vibrio fischeri: a symbiotic bacterium with pathogenic congeners.</title>
        <authorList>
            <person name="Ruby E.G."/>
            <person name="Urbanowski M."/>
            <person name="Campbell J."/>
            <person name="Dunn A."/>
            <person name="Faini M."/>
            <person name="Gunsalus R."/>
            <person name="Lostroh P."/>
            <person name="Lupp C."/>
            <person name="McCann J."/>
            <person name="Millikan D."/>
            <person name="Schaefer A."/>
            <person name="Stabb E."/>
            <person name="Stevens A."/>
            <person name="Visick K."/>
            <person name="Whistler C."/>
            <person name="Greenberg E.P."/>
        </authorList>
    </citation>
    <scope>NUCLEOTIDE SEQUENCE [LARGE SCALE GENOMIC DNA]</scope>
    <source>
        <strain>ATCC 700601 / ES114</strain>
    </source>
</reference>
<sequence>MSGSAKYSDWSQVMTLIANAAEQGNHQPLLTMLMTPDEREALVARVNIFHELLQGELSQRQISQLLGVGVATITRGSNELKSHTDEEKVWLMDLLEKSTKSELDVEKE</sequence>
<organism>
    <name type="scientific">Aliivibrio fischeri (strain ATCC 700601 / ES114)</name>
    <name type="common">Vibrio fischeri</name>
    <dbReference type="NCBI Taxonomy" id="312309"/>
    <lineage>
        <taxon>Bacteria</taxon>
        <taxon>Pseudomonadati</taxon>
        <taxon>Pseudomonadota</taxon>
        <taxon>Gammaproteobacteria</taxon>
        <taxon>Vibrionales</taxon>
        <taxon>Vibrionaceae</taxon>
        <taxon>Aliivibrio</taxon>
    </lineage>
</organism>
<keyword id="KW-0963">Cytoplasm</keyword>
<keyword id="KW-0238">DNA-binding</keyword>
<keyword id="KW-1185">Reference proteome</keyword>
<keyword id="KW-0678">Repressor</keyword>
<keyword id="KW-0804">Transcription</keyword>
<keyword id="KW-0805">Transcription regulation</keyword>
<protein>
    <recommendedName>
        <fullName evidence="1">Trp operon repressor homolog</fullName>
    </recommendedName>
</protein>
<feature type="chain" id="PRO_0000196514" description="Trp operon repressor homolog">
    <location>
        <begin position="1"/>
        <end position="108"/>
    </location>
</feature>
<feature type="DNA-binding region" evidence="1">
    <location>
        <begin position="59"/>
        <end position="82"/>
    </location>
</feature>
<name>TRPR_ALIF1</name>
<comment type="function">
    <text evidence="1">This protein is an aporepressor. When complexed with L-tryptophan it binds the operator region of the trp operon and prevents the initiation of transcription.</text>
</comment>
<comment type="subunit">
    <text evidence="1">Homodimer.</text>
</comment>
<comment type="subcellular location">
    <subcellularLocation>
        <location evidence="1">Cytoplasm</location>
    </subcellularLocation>
</comment>
<comment type="similarity">
    <text evidence="1">Belongs to the TrpR family.</text>
</comment>